<accession>Q8Y5E4</accession>
<name>DACA_LISMO</name>
<comment type="function">
    <text evidence="3 4">Catalyzes the condensation of 2 ATP molecules into cyclic di-AMP (c-di-AMP) (PubMed:25605729). c-di-AMP is a signaling compound secreted into the host's cytosol where it triggers the cytosolic surveillance pathway (CSP), a host pathway of innate immunity characterized by expression of beta interferon (IFN-beta) and coregulated genes (PubMed:20508090). Expression of truncated proteins (missing first 80 or 100 residues) in E.coli leads to c-di-AMP synthesis (PubMed:25605729).</text>
</comment>
<comment type="catalytic activity">
    <reaction evidence="1">
        <text>2 ATP = 3',3'-c-di-AMP + 2 diphosphate</text>
        <dbReference type="Rhea" id="RHEA:35655"/>
        <dbReference type="ChEBI" id="CHEBI:30616"/>
        <dbReference type="ChEBI" id="CHEBI:33019"/>
        <dbReference type="ChEBI" id="CHEBI:71500"/>
        <dbReference type="EC" id="2.7.7.85"/>
    </reaction>
</comment>
<comment type="cofactor">
    <cofactor evidence="4">
        <name>Co(2+)</name>
        <dbReference type="ChEBI" id="CHEBI:48828"/>
    </cofactor>
    <text evidence="4">Optimal activity at 0.5-1 mM CoCl(2), also functions with Mn(2+), for a construct missing residues 1-80.</text>
</comment>
<comment type="subunit">
    <text evidence="7">Homodimer, required for active site formation (Probable).</text>
</comment>
<comment type="subcellular location">
    <subcellularLocation>
        <location evidence="1">Cell membrane</location>
        <topology evidence="1">Multi-pass membrane protein</topology>
    </subcellularLocation>
</comment>
<comment type="disruption phenotype">
    <text evidence="3">Essential, it cannot be deleted.</text>
</comment>
<comment type="similarity">
    <text evidence="1">Belongs to the adenylate cyclase family. DacA/CdaA subfamily.</text>
</comment>
<reference key="1">
    <citation type="journal article" date="2001" name="Science">
        <title>Comparative genomics of Listeria species.</title>
        <authorList>
            <person name="Glaser P."/>
            <person name="Frangeul L."/>
            <person name="Buchrieser C."/>
            <person name="Rusniok C."/>
            <person name="Amend A."/>
            <person name="Baquero F."/>
            <person name="Berche P."/>
            <person name="Bloecker H."/>
            <person name="Brandt P."/>
            <person name="Chakraborty T."/>
            <person name="Charbit A."/>
            <person name="Chetouani F."/>
            <person name="Couve E."/>
            <person name="de Daruvar A."/>
            <person name="Dehoux P."/>
            <person name="Domann E."/>
            <person name="Dominguez-Bernal G."/>
            <person name="Duchaud E."/>
            <person name="Durant L."/>
            <person name="Dussurget O."/>
            <person name="Entian K.-D."/>
            <person name="Fsihi H."/>
            <person name="Garcia-del Portillo F."/>
            <person name="Garrido P."/>
            <person name="Gautier L."/>
            <person name="Goebel W."/>
            <person name="Gomez-Lopez N."/>
            <person name="Hain T."/>
            <person name="Hauf J."/>
            <person name="Jackson D."/>
            <person name="Jones L.-M."/>
            <person name="Kaerst U."/>
            <person name="Kreft J."/>
            <person name="Kuhn M."/>
            <person name="Kunst F."/>
            <person name="Kurapkat G."/>
            <person name="Madueno E."/>
            <person name="Maitournam A."/>
            <person name="Mata Vicente J."/>
            <person name="Ng E."/>
            <person name="Nedjari H."/>
            <person name="Nordsiek G."/>
            <person name="Novella S."/>
            <person name="de Pablos B."/>
            <person name="Perez-Diaz J.-C."/>
            <person name="Purcell R."/>
            <person name="Remmel B."/>
            <person name="Rose M."/>
            <person name="Schlueter T."/>
            <person name="Simoes N."/>
            <person name="Tierrez A."/>
            <person name="Vazquez-Boland J.-A."/>
            <person name="Voss H."/>
            <person name="Wehland J."/>
            <person name="Cossart P."/>
        </authorList>
    </citation>
    <scope>NUCLEOTIDE SEQUENCE [LARGE SCALE GENOMIC DNA]</scope>
    <source>
        <strain>ATCC BAA-679 / EGD-e</strain>
    </source>
</reference>
<reference key="2">
    <citation type="journal article" date="2010" name="Science">
        <title>c-di-AMP secreted by intracellular Listeria monocytogenes activates a host type I interferon response.</title>
        <authorList>
            <person name="Woodward J.J."/>
            <person name="Iavarone A.T."/>
            <person name="Portnoy D.A."/>
        </authorList>
    </citation>
    <scope>FUNCTION</scope>
    <scope>GENE NAME</scope>
    <scope>DISRUPTION PHENOTYPE</scope>
</reference>
<reference key="3">
    <citation type="journal article" date="2015" name="J. Biol. Chem.">
        <title>Structural and biochemical analysis of the essential diadenylate cyclase CdaA from Listeria monocytogenes.</title>
        <authorList>
            <person name="Rosenberg J."/>
            <person name="Dickmanns A."/>
            <person name="Neumann P."/>
            <person name="Gunka K."/>
            <person name="Arens J."/>
            <person name="Kaever V."/>
            <person name="Stuelke J."/>
            <person name="Ficner R."/>
            <person name="Commichau F.M."/>
        </authorList>
    </citation>
    <scope>X-RAY CRYSTALLOGRAPHY (2.80 ANGSTROMS) OF 101-273 IN COMPLEX WITH ATP</scope>
    <scope>FUNCTION</scope>
    <scope>COFACTOR</scope>
    <scope>SUBUNIT</scope>
    <scope>MUTAGENESIS OF ASP-171; GLY-172 AND THR-202</scope>
    <source>
        <strain>ATCC BAA-679 / EGD-e</strain>
    </source>
</reference>
<protein>
    <recommendedName>
        <fullName evidence="1 5">Diadenylate cyclase</fullName>
        <shortName evidence="1">DAC</shortName>
        <ecNumber evidence="1">2.7.7.85</ecNumber>
    </recommendedName>
    <alternativeName>
        <fullName evidence="1">Cyclic-di-AMP synthase</fullName>
        <shortName evidence="1">c-di-AMP synthase</shortName>
    </alternativeName>
    <alternativeName>
        <fullName evidence="6">Diadenylate cyclase CdaA</fullName>
    </alternativeName>
</protein>
<proteinExistence type="evidence at protein level"/>
<evidence type="ECO:0000255" key="1">
    <source>
        <dbReference type="HAMAP-Rule" id="MF_01499"/>
    </source>
</evidence>
<evidence type="ECO:0000255" key="2">
    <source>
        <dbReference type="PROSITE-ProRule" id="PRU01130"/>
    </source>
</evidence>
<evidence type="ECO:0000269" key="3">
    <source>
    </source>
</evidence>
<evidence type="ECO:0000269" key="4">
    <source>
    </source>
</evidence>
<evidence type="ECO:0000303" key="5">
    <source>
    </source>
</evidence>
<evidence type="ECO:0000303" key="6">
    <source>
    </source>
</evidence>
<evidence type="ECO:0000305" key="7">
    <source>
    </source>
</evidence>
<evidence type="ECO:0007744" key="8">
    <source>
        <dbReference type="PDB" id="4RV7"/>
    </source>
</evidence>
<evidence type="ECO:0007829" key="9">
    <source>
        <dbReference type="PDB" id="4RV7"/>
    </source>
</evidence>
<evidence type="ECO:0007829" key="10">
    <source>
        <dbReference type="PDB" id="6HVL"/>
    </source>
</evidence>
<evidence type="ECO:0007829" key="11">
    <source>
        <dbReference type="PDB" id="8C4N"/>
    </source>
</evidence>
<evidence type="ECO:0007829" key="12">
    <source>
        <dbReference type="PDB" id="8C4O"/>
    </source>
</evidence>
<evidence type="ECO:0007829" key="13">
    <source>
        <dbReference type="PDB" id="8C4P"/>
    </source>
</evidence>
<keyword id="KW-0002">3D-structure</keyword>
<keyword id="KW-0067">ATP-binding</keyword>
<keyword id="KW-1003">Cell membrane</keyword>
<keyword id="KW-0472">Membrane</keyword>
<keyword id="KW-0547">Nucleotide-binding</keyword>
<keyword id="KW-0548">Nucleotidyltransferase</keyword>
<keyword id="KW-1185">Reference proteome</keyword>
<keyword id="KW-0808">Transferase</keyword>
<keyword id="KW-0812">Transmembrane</keyword>
<keyword id="KW-1133">Transmembrane helix</keyword>
<gene>
    <name evidence="1 5" type="primary">dacA</name>
    <name evidence="6" type="synonym">cdaA</name>
    <name type="ordered locus">lmo2120</name>
</gene>
<organism>
    <name type="scientific">Listeria monocytogenes serovar 1/2a (strain ATCC BAA-679 / EGD-e)</name>
    <dbReference type="NCBI Taxonomy" id="169963"/>
    <lineage>
        <taxon>Bacteria</taxon>
        <taxon>Bacillati</taxon>
        <taxon>Bacillota</taxon>
        <taxon>Bacilli</taxon>
        <taxon>Bacillales</taxon>
        <taxon>Listeriaceae</taxon>
        <taxon>Listeria</taxon>
    </lineage>
</organism>
<feature type="chain" id="PRO_0000424179" description="Diadenylate cyclase">
    <location>
        <begin position="1"/>
        <end position="273"/>
    </location>
</feature>
<feature type="transmembrane region" description="Helical" evidence="1">
    <location>
        <begin position="12"/>
        <end position="32"/>
    </location>
</feature>
<feature type="transmembrane region" description="Helical" evidence="1">
    <location>
        <begin position="37"/>
        <end position="57"/>
    </location>
</feature>
<feature type="transmembrane region" description="Helical" evidence="1">
    <location>
        <begin position="61"/>
        <end position="81"/>
    </location>
</feature>
<feature type="domain" description="DAC" evidence="2">
    <location>
        <begin position="82"/>
        <end position="242"/>
    </location>
</feature>
<feature type="binding site" evidence="8">
    <location>
        <position position="171"/>
    </location>
    <ligand>
        <name>ATP</name>
        <dbReference type="ChEBI" id="CHEBI:30616"/>
    </ligand>
</feature>
<feature type="binding site" evidence="8">
    <location>
        <position position="188"/>
    </location>
    <ligand>
        <name>ATP</name>
        <dbReference type="ChEBI" id="CHEBI:30616"/>
    </ligand>
</feature>
<feature type="binding site" evidence="8">
    <location>
        <begin position="201"/>
        <end position="204"/>
    </location>
    <ligand>
        <name>ATP</name>
        <dbReference type="ChEBI" id="CHEBI:30616"/>
    </ligand>
</feature>
<feature type="binding site" evidence="8">
    <location>
        <begin position="222"/>
        <end position="224"/>
    </location>
    <ligand>
        <name>ATP</name>
        <dbReference type="ChEBI" id="CHEBI:30616"/>
    </ligand>
</feature>
<feature type="mutagenesis site" description="No c-di-AMP formation (construct without residues 1-80)." evidence="4">
    <original>D</original>
    <variation>N</variation>
    <location>
        <position position="171"/>
    </location>
</feature>
<feature type="mutagenesis site" description="No c-di-AMP formation (construct without residues 1-80)." evidence="4">
    <original>G</original>
    <variation>A</variation>
    <location>
        <position position="172"/>
    </location>
</feature>
<feature type="mutagenesis site" description="No c-di-AMP formation (construct without residues 1-80)." evidence="4">
    <original>T</original>
    <variation>N</variation>
    <location>
        <position position="202"/>
    </location>
</feature>
<feature type="strand" evidence="10">
    <location>
        <begin position="101"/>
        <end position="103"/>
    </location>
</feature>
<feature type="helix" evidence="13">
    <location>
        <begin position="105"/>
        <end position="126"/>
    </location>
</feature>
<feature type="strand" evidence="13">
    <location>
        <begin position="130"/>
        <end position="134"/>
    </location>
</feature>
<feature type="strand" evidence="9">
    <location>
        <begin position="136"/>
        <end position="139"/>
    </location>
</feature>
<feature type="helix" evidence="13">
    <location>
        <begin position="141"/>
        <end position="144"/>
    </location>
</feature>
<feature type="strand" evidence="13">
    <location>
        <begin position="147"/>
        <end position="153"/>
    </location>
</feature>
<feature type="helix" evidence="13">
    <location>
        <begin position="156"/>
        <end position="163"/>
    </location>
</feature>
<feature type="turn" evidence="12">
    <location>
        <begin position="168"/>
        <end position="170"/>
    </location>
</feature>
<feature type="strand" evidence="13">
    <location>
        <begin position="171"/>
        <end position="177"/>
    </location>
</feature>
<feature type="strand" evidence="13">
    <location>
        <begin position="180"/>
        <end position="186"/>
    </location>
</feature>
<feature type="helix" evidence="13">
    <location>
        <begin position="202"/>
        <end position="213"/>
    </location>
</feature>
<feature type="strand" evidence="13">
    <location>
        <begin position="217"/>
        <end position="221"/>
    </location>
</feature>
<feature type="turn" evidence="13">
    <location>
        <begin position="223"/>
        <end position="225"/>
    </location>
</feature>
<feature type="strand" evidence="13">
    <location>
        <begin position="228"/>
        <end position="232"/>
    </location>
</feature>
<feature type="strand" evidence="13">
    <location>
        <begin position="235"/>
        <end position="237"/>
    </location>
</feature>
<feature type="helix" evidence="13">
    <location>
        <begin position="242"/>
        <end position="253"/>
    </location>
</feature>
<feature type="helix" evidence="11">
    <location>
        <begin position="256"/>
        <end position="258"/>
    </location>
</feature>
<feature type="turn" evidence="13">
    <location>
        <begin position="263"/>
        <end position="266"/>
    </location>
</feature>
<sequence length="273" mass="30445">MDFSNMSILHYLANIVDILVVWFVIYKVIMLIRGTKAVQLLKGIFIIIAVKLLSGFFGLQTVEWITDQMLTWGFLAIIIIFQPELRRALETLGRGNIFTRYGSRIEREQHHLIESIEKSTQYMAKRRIGALISVARDTGMDDYIETGIPLNAKISSQLLINIFIPNTPLHDGAVIIKGNEIASAASYLPLSDSPFLSKELGTRHRAALGISEVTDSITIVVSEETGGISLTKGGELFRDVSEEELHKILLKELVTVTAKKPSIFSKWKGGKSE</sequence>
<dbReference type="EC" id="2.7.7.85" evidence="1"/>
<dbReference type="EMBL" id="AL591982">
    <property type="protein sequence ID" value="CAD00198.1"/>
    <property type="molecule type" value="Genomic_DNA"/>
</dbReference>
<dbReference type="PIR" id="AH1339">
    <property type="entry name" value="AH1339"/>
</dbReference>
<dbReference type="RefSeq" id="NP_465644.1">
    <property type="nucleotide sequence ID" value="NC_003210.1"/>
</dbReference>
<dbReference type="RefSeq" id="WP_003722380.1">
    <property type="nucleotide sequence ID" value="NZ_CP149495.1"/>
</dbReference>
<dbReference type="PDB" id="4RV7">
    <property type="method" value="X-ray"/>
    <property type="resolution" value="2.80 A"/>
    <property type="chains" value="A/B/C/D=101-273"/>
</dbReference>
<dbReference type="PDB" id="6HVL">
    <property type="method" value="X-ray"/>
    <property type="resolution" value="2.80 A"/>
    <property type="chains" value="A/B=101-273"/>
</dbReference>
<dbReference type="PDB" id="6HVM">
    <property type="method" value="X-ray"/>
    <property type="resolution" value="2.00 A"/>
    <property type="chains" value="A/B=101-273"/>
</dbReference>
<dbReference type="PDB" id="6HVN">
    <property type="method" value="X-ray"/>
    <property type="resolution" value="2.23 A"/>
    <property type="chains" value="A/B=101-273"/>
</dbReference>
<dbReference type="PDB" id="8C4J">
    <property type="method" value="X-ray"/>
    <property type="resolution" value="1.83 A"/>
    <property type="chains" value="A/B=101-273"/>
</dbReference>
<dbReference type="PDB" id="8C4M">
    <property type="method" value="X-ray"/>
    <property type="resolution" value="1.51 A"/>
    <property type="chains" value="A/B=101-273"/>
</dbReference>
<dbReference type="PDB" id="8C4N">
    <property type="method" value="X-ray"/>
    <property type="resolution" value="1.75 A"/>
    <property type="chains" value="A/B=101-273"/>
</dbReference>
<dbReference type="PDB" id="8C4O">
    <property type="method" value="X-ray"/>
    <property type="resolution" value="1.97 A"/>
    <property type="chains" value="A/B=101-273"/>
</dbReference>
<dbReference type="PDB" id="8C4P">
    <property type="method" value="X-ray"/>
    <property type="resolution" value="1.20 A"/>
    <property type="chains" value="A/B=101-273"/>
</dbReference>
<dbReference type="PDB" id="8C4Q">
    <property type="method" value="X-ray"/>
    <property type="resolution" value="1.45 A"/>
    <property type="chains" value="A/B=101-273"/>
</dbReference>
<dbReference type="PDB" id="8C4R">
    <property type="method" value="X-ray"/>
    <property type="resolution" value="1.55 A"/>
    <property type="chains" value="A/B=101-273"/>
</dbReference>
<dbReference type="PDB" id="8S45">
    <property type="method" value="X-ray"/>
    <property type="resolution" value="1.69 A"/>
    <property type="chains" value="A/B=101-273"/>
</dbReference>
<dbReference type="PDB" id="8S46">
    <property type="method" value="X-ray"/>
    <property type="resolution" value="1.99 A"/>
    <property type="chains" value="A/B=101-273"/>
</dbReference>
<dbReference type="PDB" id="8S47">
    <property type="method" value="X-ray"/>
    <property type="resolution" value="2.11 A"/>
    <property type="chains" value="A/B=101-273"/>
</dbReference>
<dbReference type="PDB" id="8S48">
    <property type="method" value="X-ray"/>
    <property type="resolution" value="1.65 A"/>
    <property type="chains" value="A/B=101-273"/>
</dbReference>
<dbReference type="PDB" id="8S49">
    <property type="method" value="X-ray"/>
    <property type="resolution" value="1.70 A"/>
    <property type="chains" value="A/B=101-273"/>
</dbReference>
<dbReference type="PDB" id="8S4A">
    <property type="method" value="X-ray"/>
    <property type="resolution" value="2.23 A"/>
    <property type="chains" value="A/B=101-273"/>
</dbReference>
<dbReference type="PDB" id="8S4B">
    <property type="method" value="X-ray"/>
    <property type="resolution" value="2.15 A"/>
    <property type="chains" value="A/B=101-273"/>
</dbReference>
<dbReference type="PDB" id="8S4C">
    <property type="method" value="X-ray"/>
    <property type="resolution" value="1.80 A"/>
    <property type="chains" value="A/B=101-273"/>
</dbReference>
<dbReference type="PDBsum" id="4RV7"/>
<dbReference type="PDBsum" id="6HVL"/>
<dbReference type="PDBsum" id="6HVM"/>
<dbReference type="PDBsum" id="6HVN"/>
<dbReference type="PDBsum" id="8C4J"/>
<dbReference type="PDBsum" id="8C4M"/>
<dbReference type="PDBsum" id="8C4N"/>
<dbReference type="PDBsum" id="8C4O"/>
<dbReference type="PDBsum" id="8C4P"/>
<dbReference type="PDBsum" id="8C4Q"/>
<dbReference type="PDBsum" id="8C4R"/>
<dbReference type="PDBsum" id="8S45"/>
<dbReference type="PDBsum" id="8S46"/>
<dbReference type="PDBsum" id="8S47"/>
<dbReference type="PDBsum" id="8S48"/>
<dbReference type="PDBsum" id="8S49"/>
<dbReference type="PDBsum" id="8S4A"/>
<dbReference type="PDBsum" id="8S4B"/>
<dbReference type="PDBsum" id="8S4C"/>
<dbReference type="SMR" id="Q8Y5E4"/>
<dbReference type="STRING" id="169963.gene:17594806"/>
<dbReference type="PaxDb" id="169963-lmo2120"/>
<dbReference type="EnsemblBacteria" id="CAD00198">
    <property type="protein sequence ID" value="CAD00198"/>
    <property type="gene ID" value="CAD00198"/>
</dbReference>
<dbReference type="GeneID" id="87011213"/>
<dbReference type="GeneID" id="984739"/>
<dbReference type="KEGG" id="lmo:lmo2120"/>
<dbReference type="PATRIC" id="fig|169963.11.peg.2172"/>
<dbReference type="eggNOG" id="COG1624">
    <property type="taxonomic scope" value="Bacteria"/>
</dbReference>
<dbReference type="HOGENOM" id="CLU_038561_0_1_9"/>
<dbReference type="OrthoDB" id="9807385at2"/>
<dbReference type="PhylomeDB" id="Q8Y5E4"/>
<dbReference type="BioCyc" id="LMON169963:LMO2120-MONOMER"/>
<dbReference type="BRENDA" id="2.7.7.85">
    <property type="organism ID" value="3045"/>
</dbReference>
<dbReference type="EvolutionaryTrace" id="Q8Y5E4"/>
<dbReference type="Proteomes" id="UP000000817">
    <property type="component" value="Chromosome"/>
</dbReference>
<dbReference type="GO" id="GO:0005886">
    <property type="term" value="C:plasma membrane"/>
    <property type="evidence" value="ECO:0007669"/>
    <property type="project" value="UniProtKB-SubCell"/>
</dbReference>
<dbReference type="GO" id="GO:0004016">
    <property type="term" value="F:adenylate cyclase activity"/>
    <property type="evidence" value="ECO:0000314"/>
    <property type="project" value="UniProtKB"/>
</dbReference>
<dbReference type="GO" id="GO:0005524">
    <property type="term" value="F:ATP binding"/>
    <property type="evidence" value="ECO:0007669"/>
    <property type="project" value="UniProtKB-UniRule"/>
</dbReference>
<dbReference type="GO" id="GO:0106408">
    <property type="term" value="F:diadenylate cyclase activity"/>
    <property type="evidence" value="ECO:0007669"/>
    <property type="project" value="UniProtKB-EC"/>
</dbReference>
<dbReference type="GO" id="GO:0006171">
    <property type="term" value="P:cAMP biosynthetic process"/>
    <property type="evidence" value="ECO:0007669"/>
    <property type="project" value="InterPro"/>
</dbReference>
<dbReference type="FunFam" id="3.40.1700.10:FF:000002">
    <property type="entry name" value="Diadenylate cyclase"/>
    <property type="match status" value="1"/>
</dbReference>
<dbReference type="Gene3D" id="3.40.1700.10">
    <property type="entry name" value="DNA integrity scanning protein, DisA, N-terminal domain"/>
    <property type="match status" value="1"/>
</dbReference>
<dbReference type="HAMAP" id="MF_01499">
    <property type="entry name" value="DacA"/>
    <property type="match status" value="1"/>
</dbReference>
<dbReference type="InterPro" id="IPR014046">
    <property type="entry name" value="C-di-AMP_synthase"/>
</dbReference>
<dbReference type="InterPro" id="IPR034701">
    <property type="entry name" value="CdaA"/>
</dbReference>
<dbReference type="InterPro" id="IPR045585">
    <property type="entry name" value="CdaA_N"/>
</dbReference>
<dbReference type="InterPro" id="IPR050338">
    <property type="entry name" value="DisA"/>
</dbReference>
<dbReference type="InterPro" id="IPR036888">
    <property type="entry name" value="DNA_integrity_DisA_N_sf"/>
</dbReference>
<dbReference type="InterPro" id="IPR003390">
    <property type="entry name" value="DNA_integrity_scan_DisA_N"/>
</dbReference>
<dbReference type="NCBIfam" id="TIGR00159">
    <property type="entry name" value="diadenylate cyclase CdaA"/>
    <property type="match status" value="1"/>
</dbReference>
<dbReference type="PANTHER" id="PTHR34185">
    <property type="entry name" value="DIADENYLATE CYCLASE"/>
    <property type="match status" value="1"/>
</dbReference>
<dbReference type="PANTHER" id="PTHR34185:SF1">
    <property type="entry name" value="DIADENYLATE CYCLASE"/>
    <property type="match status" value="1"/>
</dbReference>
<dbReference type="Pfam" id="PF19293">
    <property type="entry name" value="CdaA_N"/>
    <property type="match status" value="1"/>
</dbReference>
<dbReference type="Pfam" id="PF02457">
    <property type="entry name" value="DAC"/>
    <property type="match status" value="1"/>
</dbReference>
<dbReference type="PIRSF" id="PIRSF004793">
    <property type="entry name" value="UCP004793"/>
    <property type="match status" value="1"/>
</dbReference>
<dbReference type="SUPFAM" id="SSF143597">
    <property type="entry name" value="YojJ-like"/>
    <property type="match status" value="1"/>
</dbReference>
<dbReference type="PROSITE" id="PS51794">
    <property type="entry name" value="DAC"/>
    <property type="match status" value="1"/>
</dbReference>